<organism>
    <name type="scientific">Listeria monocytogenes serovar 1/2a (strain ATCC BAA-679 / EGD-e)</name>
    <dbReference type="NCBI Taxonomy" id="169963"/>
    <lineage>
        <taxon>Bacteria</taxon>
        <taxon>Bacillati</taxon>
        <taxon>Bacillota</taxon>
        <taxon>Bacilli</taxon>
        <taxon>Bacillales</taxon>
        <taxon>Listeriaceae</taxon>
        <taxon>Listeria</taxon>
    </lineage>
</organism>
<dbReference type="EMBL" id="AF032444">
    <property type="protein sequence ID" value="AAC38787.1"/>
    <property type="molecule type" value="Genomic_DNA"/>
</dbReference>
<dbReference type="EMBL" id="AL591977">
    <property type="protein sequence ID" value="CAC98971.1"/>
    <property type="molecule type" value="Genomic_DNA"/>
</dbReference>
<dbReference type="PIR" id="AE1186">
    <property type="entry name" value="AE1186"/>
</dbReference>
<dbReference type="RefSeq" id="NP_464419.1">
    <property type="nucleotide sequence ID" value="NC_003210.1"/>
</dbReference>
<dbReference type="RefSeq" id="WP_003721460.1">
    <property type="nucleotide sequence ID" value="NZ_CP149495.1"/>
</dbReference>
<dbReference type="SMR" id="P0A4J8"/>
<dbReference type="STRING" id="169963.gene:17593544"/>
<dbReference type="PaxDb" id="169963-lmo0893"/>
<dbReference type="EnsemblBacteria" id="CAC98971">
    <property type="protein sequence ID" value="CAC98971"/>
    <property type="gene ID" value="CAC98971"/>
</dbReference>
<dbReference type="GeneID" id="93238768"/>
<dbReference type="GeneID" id="986526"/>
<dbReference type="KEGG" id="lmo:lmo0893"/>
<dbReference type="PATRIC" id="fig|169963.11.peg.918"/>
<dbReference type="eggNOG" id="COG1366">
    <property type="taxonomic scope" value="Bacteria"/>
</dbReference>
<dbReference type="HOGENOM" id="CLU_115403_9_3_9"/>
<dbReference type="OrthoDB" id="9793697at2"/>
<dbReference type="PhylomeDB" id="P0A4J8"/>
<dbReference type="BioCyc" id="LMON169963:LMO0893-MONOMER"/>
<dbReference type="Proteomes" id="UP000000817">
    <property type="component" value="Chromosome"/>
</dbReference>
<dbReference type="GO" id="GO:0043856">
    <property type="term" value="F:anti-sigma factor antagonist activity"/>
    <property type="evidence" value="ECO:0000318"/>
    <property type="project" value="GO_Central"/>
</dbReference>
<dbReference type="CDD" id="cd07043">
    <property type="entry name" value="STAS_anti-anti-sigma_factors"/>
    <property type="match status" value="1"/>
</dbReference>
<dbReference type="FunFam" id="3.30.750.24:FF:000001">
    <property type="entry name" value="Anti-sigma factor antagonist"/>
    <property type="match status" value="1"/>
</dbReference>
<dbReference type="Gene3D" id="3.30.750.24">
    <property type="entry name" value="STAS domain"/>
    <property type="match status" value="1"/>
</dbReference>
<dbReference type="InterPro" id="IPR003658">
    <property type="entry name" value="Anti-sigma_ant"/>
</dbReference>
<dbReference type="InterPro" id="IPR002645">
    <property type="entry name" value="STAS_dom"/>
</dbReference>
<dbReference type="InterPro" id="IPR036513">
    <property type="entry name" value="STAS_dom_sf"/>
</dbReference>
<dbReference type="NCBIfam" id="TIGR00377">
    <property type="entry name" value="ant_ant_sig"/>
    <property type="match status" value="1"/>
</dbReference>
<dbReference type="PANTHER" id="PTHR33495">
    <property type="entry name" value="ANTI-SIGMA FACTOR ANTAGONIST TM_1081-RELATED-RELATED"/>
    <property type="match status" value="1"/>
</dbReference>
<dbReference type="PANTHER" id="PTHR33495:SF9">
    <property type="entry name" value="ANTI-SIGMA-B FACTOR ANTAGONIST"/>
    <property type="match status" value="1"/>
</dbReference>
<dbReference type="Pfam" id="PF01740">
    <property type="entry name" value="STAS"/>
    <property type="match status" value="1"/>
</dbReference>
<dbReference type="SUPFAM" id="SSF52091">
    <property type="entry name" value="SpoIIaa-like"/>
    <property type="match status" value="1"/>
</dbReference>
<dbReference type="PROSITE" id="PS50801">
    <property type="entry name" value="STAS"/>
    <property type="match status" value="1"/>
</dbReference>
<comment type="function">
    <text evidence="1">Positive regulator of sigma-B activity. Non-phosphorylated RsbV binds to RsbW, preventing its association with sigma-B. When phosphorylated, releases RsbW, which is then free to complex with and inactivate sigma-B (By similarity).</text>
</comment>
<comment type="PTM">
    <text evidence="1">Phosphorylated by RsbW on a serine residue.</text>
</comment>
<comment type="similarity">
    <text evidence="3">Belongs to the anti-sigma-factor antagonist family.</text>
</comment>
<feature type="chain" id="PRO_0000194187" description="Anti-sigma-B factor antagonist">
    <location>
        <begin position="1"/>
        <end position="114"/>
    </location>
</feature>
<feature type="domain" description="STAS" evidence="2">
    <location>
        <begin position="4"/>
        <end position="114"/>
    </location>
</feature>
<feature type="modified residue" description="Phosphoserine" evidence="1">
    <location>
        <position position="58"/>
    </location>
</feature>
<name>RSBV_LISMO</name>
<reference key="1">
    <citation type="journal article" date="1998" name="J. Bacteriol.">
        <title>General stress transcription factor sigmaB and its role in acid tolerance and virulence of Listeria monocytogenes.</title>
        <authorList>
            <person name="Wiedmann M."/>
            <person name="Arvik T.J."/>
            <person name="Hurley R.J."/>
            <person name="Boor K.J."/>
        </authorList>
    </citation>
    <scope>NUCLEOTIDE SEQUENCE [GENOMIC DNA]</scope>
    <source>
        <strain>689426</strain>
    </source>
</reference>
<reference key="2">
    <citation type="journal article" date="2001" name="Science">
        <title>Comparative genomics of Listeria species.</title>
        <authorList>
            <person name="Glaser P."/>
            <person name="Frangeul L."/>
            <person name="Buchrieser C."/>
            <person name="Rusniok C."/>
            <person name="Amend A."/>
            <person name="Baquero F."/>
            <person name="Berche P."/>
            <person name="Bloecker H."/>
            <person name="Brandt P."/>
            <person name="Chakraborty T."/>
            <person name="Charbit A."/>
            <person name="Chetouani F."/>
            <person name="Couve E."/>
            <person name="de Daruvar A."/>
            <person name="Dehoux P."/>
            <person name="Domann E."/>
            <person name="Dominguez-Bernal G."/>
            <person name="Duchaud E."/>
            <person name="Durant L."/>
            <person name="Dussurget O."/>
            <person name="Entian K.-D."/>
            <person name="Fsihi H."/>
            <person name="Garcia-del Portillo F."/>
            <person name="Garrido P."/>
            <person name="Gautier L."/>
            <person name="Goebel W."/>
            <person name="Gomez-Lopez N."/>
            <person name="Hain T."/>
            <person name="Hauf J."/>
            <person name="Jackson D."/>
            <person name="Jones L.-M."/>
            <person name="Kaerst U."/>
            <person name="Kreft J."/>
            <person name="Kuhn M."/>
            <person name="Kunst F."/>
            <person name="Kurapkat G."/>
            <person name="Madueno E."/>
            <person name="Maitournam A."/>
            <person name="Mata Vicente J."/>
            <person name="Ng E."/>
            <person name="Nedjari H."/>
            <person name="Nordsiek G."/>
            <person name="Novella S."/>
            <person name="de Pablos B."/>
            <person name="Perez-Diaz J.-C."/>
            <person name="Purcell R."/>
            <person name="Remmel B."/>
            <person name="Rose M."/>
            <person name="Schlueter T."/>
            <person name="Simoes N."/>
            <person name="Tierrez A."/>
            <person name="Vazquez-Boland J.-A."/>
            <person name="Voss H."/>
            <person name="Wehland J."/>
            <person name="Cossart P."/>
        </authorList>
    </citation>
    <scope>NUCLEOTIDE SEQUENCE [LARGE SCALE GENOMIC DNA]</scope>
    <source>
        <strain>ATCC BAA-679 / EGD-e</strain>
    </source>
</reference>
<gene>
    <name type="primary">rsbV</name>
    <name type="ordered locus">lmo0893</name>
</gene>
<protein>
    <recommendedName>
        <fullName>Anti-sigma-B factor antagonist</fullName>
    </recommendedName>
    <alternativeName>
        <fullName>Anti-anti-sigma-B factor</fullName>
    </alternativeName>
</protein>
<accession>P0A4J8</accession>
<accession>O85016</accession>
<evidence type="ECO:0000250" key="1"/>
<evidence type="ECO:0000255" key="2">
    <source>
        <dbReference type="PROSITE-ProRule" id="PRU00198"/>
    </source>
</evidence>
<evidence type="ECO:0000305" key="3"/>
<sequence length="114" mass="12799">MNISIEIKERDTDHIDIFVAGEIDAYTAPKVKEALEVYQVKEGIVLRIDLTEVSYMDSTGLGVFVGAFKSLRQRQSELVLFGLSDRLFRLFEITGLSDIIEIKNVEGEMNGNNA</sequence>
<keyword id="KW-0597">Phosphoprotein</keyword>
<keyword id="KW-1185">Reference proteome</keyword>
<proteinExistence type="inferred from homology"/>